<evidence type="ECO:0000255" key="1">
    <source>
        <dbReference type="PROSITE-ProRule" id="PRU01118"/>
    </source>
</evidence>
<gene>
    <name type="primary">ykzQ</name>
    <name type="ordered locus">BSU13789</name>
</gene>
<reference key="1">
    <citation type="journal article" date="1997" name="Nature">
        <title>The complete genome sequence of the Gram-positive bacterium Bacillus subtilis.</title>
        <authorList>
            <person name="Kunst F."/>
            <person name="Ogasawara N."/>
            <person name="Moszer I."/>
            <person name="Albertini A.M."/>
            <person name="Alloni G."/>
            <person name="Azevedo V."/>
            <person name="Bertero M.G."/>
            <person name="Bessieres P."/>
            <person name="Bolotin A."/>
            <person name="Borchert S."/>
            <person name="Borriss R."/>
            <person name="Boursier L."/>
            <person name="Brans A."/>
            <person name="Braun M."/>
            <person name="Brignell S.C."/>
            <person name="Bron S."/>
            <person name="Brouillet S."/>
            <person name="Bruschi C.V."/>
            <person name="Caldwell B."/>
            <person name="Capuano V."/>
            <person name="Carter N.M."/>
            <person name="Choi S.-K."/>
            <person name="Codani J.-J."/>
            <person name="Connerton I.F."/>
            <person name="Cummings N.J."/>
            <person name="Daniel R.A."/>
            <person name="Denizot F."/>
            <person name="Devine K.M."/>
            <person name="Duesterhoeft A."/>
            <person name="Ehrlich S.D."/>
            <person name="Emmerson P.T."/>
            <person name="Entian K.-D."/>
            <person name="Errington J."/>
            <person name="Fabret C."/>
            <person name="Ferrari E."/>
            <person name="Foulger D."/>
            <person name="Fritz C."/>
            <person name="Fujita M."/>
            <person name="Fujita Y."/>
            <person name="Fuma S."/>
            <person name="Galizzi A."/>
            <person name="Galleron N."/>
            <person name="Ghim S.-Y."/>
            <person name="Glaser P."/>
            <person name="Goffeau A."/>
            <person name="Golightly E.J."/>
            <person name="Grandi G."/>
            <person name="Guiseppi G."/>
            <person name="Guy B.J."/>
            <person name="Haga K."/>
            <person name="Haiech J."/>
            <person name="Harwood C.R."/>
            <person name="Henaut A."/>
            <person name="Hilbert H."/>
            <person name="Holsappel S."/>
            <person name="Hosono S."/>
            <person name="Hullo M.-F."/>
            <person name="Itaya M."/>
            <person name="Jones L.-M."/>
            <person name="Joris B."/>
            <person name="Karamata D."/>
            <person name="Kasahara Y."/>
            <person name="Klaerr-Blanchard M."/>
            <person name="Klein C."/>
            <person name="Kobayashi Y."/>
            <person name="Koetter P."/>
            <person name="Koningstein G."/>
            <person name="Krogh S."/>
            <person name="Kumano M."/>
            <person name="Kurita K."/>
            <person name="Lapidus A."/>
            <person name="Lardinois S."/>
            <person name="Lauber J."/>
            <person name="Lazarevic V."/>
            <person name="Lee S.-M."/>
            <person name="Levine A."/>
            <person name="Liu H."/>
            <person name="Masuda S."/>
            <person name="Mauel C."/>
            <person name="Medigue C."/>
            <person name="Medina N."/>
            <person name="Mellado R.P."/>
            <person name="Mizuno M."/>
            <person name="Moestl D."/>
            <person name="Nakai S."/>
            <person name="Noback M."/>
            <person name="Noone D."/>
            <person name="O'Reilly M."/>
            <person name="Ogawa K."/>
            <person name="Ogiwara A."/>
            <person name="Oudega B."/>
            <person name="Park S.-H."/>
            <person name="Parro V."/>
            <person name="Pohl T.M."/>
            <person name="Portetelle D."/>
            <person name="Porwollik S."/>
            <person name="Prescott A.M."/>
            <person name="Presecan E."/>
            <person name="Pujic P."/>
            <person name="Purnelle B."/>
            <person name="Rapoport G."/>
            <person name="Rey M."/>
            <person name="Reynolds S."/>
            <person name="Rieger M."/>
            <person name="Rivolta C."/>
            <person name="Rocha E."/>
            <person name="Roche B."/>
            <person name="Rose M."/>
            <person name="Sadaie Y."/>
            <person name="Sato T."/>
            <person name="Scanlan E."/>
            <person name="Schleich S."/>
            <person name="Schroeter R."/>
            <person name="Scoffone F."/>
            <person name="Sekiguchi J."/>
            <person name="Sekowska A."/>
            <person name="Seror S.J."/>
            <person name="Serror P."/>
            <person name="Shin B.-S."/>
            <person name="Soldo B."/>
            <person name="Sorokin A."/>
            <person name="Tacconi E."/>
            <person name="Takagi T."/>
            <person name="Takahashi H."/>
            <person name="Takemaru K."/>
            <person name="Takeuchi M."/>
            <person name="Tamakoshi A."/>
            <person name="Tanaka T."/>
            <person name="Terpstra P."/>
            <person name="Tognoni A."/>
            <person name="Tosato V."/>
            <person name="Uchiyama S."/>
            <person name="Vandenbol M."/>
            <person name="Vannier F."/>
            <person name="Vassarotti A."/>
            <person name="Viari A."/>
            <person name="Wambutt R."/>
            <person name="Wedler E."/>
            <person name="Wedler H."/>
            <person name="Weitzenegger T."/>
            <person name="Winters P."/>
            <person name="Wipat A."/>
            <person name="Yamamoto H."/>
            <person name="Yamane K."/>
            <person name="Yasumoto K."/>
            <person name="Yata K."/>
            <person name="Yoshida K."/>
            <person name="Yoshikawa H.-F."/>
            <person name="Zumstein E."/>
            <person name="Yoshikawa H."/>
            <person name="Danchin A."/>
        </authorList>
    </citation>
    <scope>NUCLEOTIDE SEQUENCE [LARGE SCALE GENOMIC DNA]</scope>
    <source>
        <strain>168</strain>
    </source>
</reference>
<reference key="2">
    <citation type="journal article" date="2009" name="Microbiology">
        <title>From a consortium sequence to a unified sequence: the Bacillus subtilis 168 reference genome a decade later.</title>
        <authorList>
            <person name="Barbe V."/>
            <person name="Cruveiller S."/>
            <person name="Kunst F."/>
            <person name="Lenoble P."/>
            <person name="Meurice G."/>
            <person name="Sekowska A."/>
            <person name="Vallenet D."/>
            <person name="Wang T."/>
            <person name="Moszer I."/>
            <person name="Medigue C."/>
            <person name="Danchin A."/>
        </authorList>
    </citation>
    <scope>IDENTIFICATION</scope>
</reference>
<protein>
    <recommendedName>
        <fullName>Uncharacterized protein YkzQ</fullName>
    </recommendedName>
</protein>
<keyword id="KW-1185">Reference proteome</keyword>
<dbReference type="EMBL" id="AL009126">
    <property type="protein sequence ID" value="CAX52610.1"/>
    <property type="molecule type" value="Genomic_DNA"/>
</dbReference>
<dbReference type="RefSeq" id="WP_003245197.1">
    <property type="nucleotide sequence ID" value="NZ_OZ025638.1"/>
</dbReference>
<dbReference type="RefSeq" id="YP_003097719.1">
    <property type="nucleotide sequence ID" value="NC_000964.3"/>
</dbReference>
<dbReference type="SMR" id="C0H403"/>
<dbReference type="FunCoup" id="C0H403">
    <property type="interactions" value="2"/>
</dbReference>
<dbReference type="STRING" id="224308.BSU13789"/>
<dbReference type="PaxDb" id="224308-BSU13789"/>
<dbReference type="EnsemblBacteria" id="CAX52610">
    <property type="protein sequence ID" value="CAX52610"/>
    <property type="gene ID" value="BSU_13789"/>
</dbReference>
<dbReference type="GeneID" id="8303133"/>
<dbReference type="KEGG" id="bsu:BSU13789"/>
<dbReference type="PATRIC" id="fig|224308.179.peg.1497"/>
<dbReference type="eggNOG" id="COG1388">
    <property type="taxonomic scope" value="Bacteria"/>
</dbReference>
<dbReference type="InParanoid" id="C0H403"/>
<dbReference type="OrthoDB" id="9805070at2"/>
<dbReference type="BioCyc" id="BSUB:BSU13789-MONOMER"/>
<dbReference type="Proteomes" id="UP000001570">
    <property type="component" value="Chromosome"/>
</dbReference>
<dbReference type="CDD" id="cd00118">
    <property type="entry name" value="LysM"/>
    <property type="match status" value="1"/>
</dbReference>
<dbReference type="Gene3D" id="3.10.350.10">
    <property type="entry name" value="LysM domain"/>
    <property type="match status" value="1"/>
</dbReference>
<dbReference type="InterPro" id="IPR018392">
    <property type="entry name" value="LysM_dom"/>
</dbReference>
<dbReference type="InterPro" id="IPR036779">
    <property type="entry name" value="LysM_dom_sf"/>
</dbReference>
<dbReference type="PANTHER" id="PTHR33734">
    <property type="entry name" value="LYSM DOMAIN-CONTAINING GPI-ANCHORED PROTEIN 2"/>
    <property type="match status" value="1"/>
</dbReference>
<dbReference type="PANTHER" id="PTHR33734:SF22">
    <property type="entry name" value="MEMBRANE-BOUND LYTIC MUREIN TRANSGLYCOSYLASE D"/>
    <property type="match status" value="1"/>
</dbReference>
<dbReference type="Pfam" id="PF01476">
    <property type="entry name" value="LysM"/>
    <property type="match status" value="1"/>
</dbReference>
<dbReference type="SMART" id="SM00257">
    <property type="entry name" value="LysM"/>
    <property type="match status" value="1"/>
</dbReference>
<dbReference type="SUPFAM" id="SSF54106">
    <property type="entry name" value="LysM domain"/>
    <property type="match status" value="1"/>
</dbReference>
<dbReference type="PROSITE" id="PS51782">
    <property type="entry name" value="LYSM"/>
    <property type="match status" value="1"/>
</dbReference>
<sequence length="75" mass="8894">MKGKIPKIRNQANKVKRTPRYMEFPVTYEVYHVESGDTLWTIAKSFEIPVQQLMNLNKLSSDRIYPGQIIKIRER</sequence>
<name>YKZQ_BACSU</name>
<accession>C0H403</accession>
<organism>
    <name type="scientific">Bacillus subtilis (strain 168)</name>
    <dbReference type="NCBI Taxonomy" id="224308"/>
    <lineage>
        <taxon>Bacteria</taxon>
        <taxon>Bacillati</taxon>
        <taxon>Bacillota</taxon>
        <taxon>Bacilli</taxon>
        <taxon>Bacillales</taxon>
        <taxon>Bacillaceae</taxon>
        <taxon>Bacillus</taxon>
    </lineage>
</organism>
<proteinExistence type="predicted"/>
<feature type="chain" id="PRO_0000389484" description="Uncharacterized protein YkzQ">
    <location>
        <begin position="1"/>
        <end position="75"/>
    </location>
</feature>
<feature type="domain" description="LysM" evidence="1">
    <location>
        <begin position="29"/>
        <end position="72"/>
    </location>
</feature>